<sequence>MNERLQFVVVTGMSGAGKTVAMQSFEDLGFFCVDNMPPALLPKFWELIKENGKISKVALVVDLRSRGFYDQILGLLTGEEEQHNIKTDVVFLDATDEELVARYKETRRAHPLAMDGRVADGVRKERELLSPIKSEAQIVIDTTNMTPRELRSDIFGHFSTNKTIPKFHIEVVSFGYKYGSPIDADIIMDVRFLPNPYYVTELKNKIGTDPAVYDYVMNQPATEEFYTDYLKLLMDIMPGYQKEGKSNLTIAIGCTGGQHRSVAIAERLAKDLSKKYVTNISHRDAHKRKETVNRS</sequence>
<name>Y450_PEDPA</name>
<reference key="1">
    <citation type="journal article" date="2006" name="Proc. Natl. Acad. Sci. U.S.A.">
        <title>Comparative genomics of the lactic acid bacteria.</title>
        <authorList>
            <person name="Makarova K.S."/>
            <person name="Slesarev A."/>
            <person name="Wolf Y.I."/>
            <person name="Sorokin A."/>
            <person name="Mirkin B."/>
            <person name="Koonin E.V."/>
            <person name="Pavlov A."/>
            <person name="Pavlova N."/>
            <person name="Karamychev V."/>
            <person name="Polouchine N."/>
            <person name="Shakhova V."/>
            <person name="Grigoriev I."/>
            <person name="Lou Y."/>
            <person name="Rohksar D."/>
            <person name="Lucas S."/>
            <person name="Huang K."/>
            <person name="Goodstein D.M."/>
            <person name="Hawkins T."/>
            <person name="Plengvidhya V."/>
            <person name="Welker D."/>
            <person name="Hughes J."/>
            <person name="Goh Y."/>
            <person name="Benson A."/>
            <person name="Baldwin K."/>
            <person name="Lee J.-H."/>
            <person name="Diaz-Muniz I."/>
            <person name="Dosti B."/>
            <person name="Smeianov V."/>
            <person name="Wechter W."/>
            <person name="Barabote R."/>
            <person name="Lorca G."/>
            <person name="Altermann E."/>
            <person name="Barrangou R."/>
            <person name="Ganesan B."/>
            <person name="Xie Y."/>
            <person name="Rawsthorne H."/>
            <person name="Tamir D."/>
            <person name="Parker C."/>
            <person name="Breidt F."/>
            <person name="Broadbent J.R."/>
            <person name="Hutkins R."/>
            <person name="O'Sullivan D."/>
            <person name="Steele J."/>
            <person name="Unlu G."/>
            <person name="Saier M.H. Jr."/>
            <person name="Klaenhammer T."/>
            <person name="Richardson P."/>
            <person name="Kozyavkin S."/>
            <person name="Weimer B.C."/>
            <person name="Mills D.A."/>
        </authorList>
    </citation>
    <scope>NUCLEOTIDE SEQUENCE [LARGE SCALE GENOMIC DNA]</scope>
    <source>
        <strain>ATCC 25745 / CCUG 21536 / LMG 10740 / 183-1w</strain>
    </source>
</reference>
<evidence type="ECO:0000255" key="1">
    <source>
        <dbReference type="HAMAP-Rule" id="MF_00636"/>
    </source>
</evidence>
<keyword id="KW-0067">ATP-binding</keyword>
<keyword id="KW-0342">GTP-binding</keyword>
<keyword id="KW-0547">Nucleotide-binding</keyword>
<dbReference type="EMBL" id="CP000422">
    <property type="protein sequence ID" value="ABJ67546.1"/>
    <property type="molecule type" value="Genomic_DNA"/>
</dbReference>
<dbReference type="SMR" id="Q03GX6"/>
<dbReference type="STRING" id="278197.PEPE_0450"/>
<dbReference type="GeneID" id="33061496"/>
<dbReference type="KEGG" id="ppe:PEPE_0450"/>
<dbReference type="eggNOG" id="COG1660">
    <property type="taxonomic scope" value="Bacteria"/>
</dbReference>
<dbReference type="HOGENOM" id="CLU_059558_0_0_9"/>
<dbReference type="OrthoDB" id="9784461at2"/>
<dbReference type="Proteomes" id="UP000000773">
    <property type="component" value="Chromosome"/>
</dbReference>
<dbReference type="GO" id="GO:0005524">
    <property type="term" value="F:ATP binding"/>
    <property type="evidence" value="ECO:0007669"/>
    <property type="project" value="UniProtKB-UniRule"/>
</dbReference>
<dbReference type="GO" id="GO:0005525">
    <property type="term" value="F:GTP binding"/>
    <property type="evidence" value="ECO:0007669"/>
    <property type="project" value="UniProtKB-UniRule"/>
</dbReference>
<dbReference type="Gene3D" id="3.40.50.300">
    <property type="entry name" value="P-loop containing nucleotide triphosphate hydrolases"/>
    <property type="match status" value="1"/>
</dbReference>
<dbReference type="HAMAP" id="MF_00636">
    <property type="entry name" value="RapZ_like"/>
    <property type="match status" value="1"/>
</dbReference>
<dbReference type="InterPro" id="IPR027417">
    <property type="entry name" value="P-loop_NTPase"/>
</dbReference>
<dbReference type="InterPro" id="IPR005337">
    <property type="entry name" value="RapZ-like"/>
</dbReference>
<dbReference type="InterPro" id="IPR053930">
    <property type="entry name" value="RapZ-like_N"/>
</dbReference>
<dbReference type="InterPro" id="IPR053931">
    <property type="entry name" value="RapZ_C"/>
</dbReference>
<dbReference type="NCBIfam" id="NF003828">
    <property type="entry name" value="PRK05416.1"/>
    <property type="match status" value="1"/>
</dbReference>
<dbReference type="PANTHER" id="PTHR30448">
    <property type="entry name" value="RNASE ADAPTER PROTEIN RAPZ"/>
    <property type="match status" value="1"/>
</dbReference>
<dbReference type="PANTHER" id="PTHR30448:SF0">
    <property type="entry name" value="RNASE ADAPTER PROTEIN RAPZ"/>
    <property type="match status" value="1"/>
</dbReference>
<dbReference type="Pfam" id="PF22740">
    <property type="entry name" value="PapZ_C"/>
    <property type="match status" value="1"/>
</dbReference>
<dbReference type="Pfam" id="PF03668">
    <property type="entry name" value="RapZ-like_N"/>
    <property type="match status" value="1"/>
</dbReference>
<dbReference type="PIRSF" id="PIRSF005052">
    <property type="entry name" value="P-loopkin"/>
    <property type="match status" value="1"/>
</dbReference>
<dbReference type="SUPFAM" id="SSF52540">
    <property type="entry name" value="P-loop containing nucleoside triphosphate hydrolases"/>
    <property type="match status" value="1"/>
</dbReference>
<gene>
    <name type="ordered locus">PEPE_0450</name>
</gene>
<organism>
    <name type="scientific">Pediococcus pentosaceus (strain ATCC 25745 / CCUG 21536 / LMG 10740 / 183-1w)</name>
    <dbReference type="NCBI Taxonomy" id="278197"/>
    <lineage>
        <taxon>Bacteria</taxon>
        <taxon>Bacillati</taxon>
        <taxon>Bacillota</taxon>
        <taxon>Bacilli</taxon>
        <taxon>Lactobacillales</taxon>
        <taxon>Lactobacillaceae</taxon>
        <taxon>Pediococcus</taxon>
    </lineage>
</organism>
<comment type="function">
    <text evidence="1">Displays ATPase and GTPase activities.</text>
</comment>
<comment type="similarity">
    <text evidence="1">Belongs to the RapZ-like family.</text>
</comment>
<feature type="chain" id="PRO_1000056840" description="Nucleotide-binding protein PEPE_0450">
    <location>
        <begin position="1"/>
        <end position="295"/>
    </location>
</feature>
<feature type="binding site" evidence="1">
    <location>
        <begin position="12"/>
        <end position="19"/>
    </location>
    <ligand>
        <name>ATP</name>
        <dbReference type="ChEBI" id="CHEBI:30616"/>
    </ligand>
</feature>
<feature type="binding site" evidence="1">
    <location>
        <begin position="62"/>
        <end position="65"/>
    </location>
    <ligand>
        <name>GTP</name>
        <dbReference type="ChEBI" id="CHEBI:37565"/>
    </ligand>
</feature>
<accession>Q03GX6</accession>
<protein>
    <recommendedName>
        <fullName evidence="1">Nucleotide-binding protein PEPE_0450</fullName>
    </recommendedName>
</protein>
<proteinExistence type="inferred from homology"/>